<evidence type="ECO:0000255" key="1">
    <source>
        <dbReference type="HAMAP-Rule" id="MF_01545"/>
    </source>
</evidence>
<feature type="chain" id="PRO_0000413999" description="p-hydroxybenzoic acid efflux pump subunit AaeB">
    <location>
        <begin position="1"/>
        <end position="651"/>
    </location>
</feature>
<feature type="transmembrane region" description="Helical" evidence="1">
    <location>
        <begin position="11"/>
        <end position="31"/>
    </location>
</feature>
<feature type="transmembrane region" description="Helical" evidence="1">
    <location>
        <begin position="41"/>
        <end position="61"/>
    </location>
</feature>
<feature type="transmembrane region" description="Helical" evidence="1">
    <location>
        <begin position="65"/>
        <end position="85"/>
    </location>
</feature>
<feature type="transmembrane region" description="Helical" evidence="1">
    <location>
        <begin position="91"/>
        <end position="111"/>
    </location>
</feature>
<feature type="transmembrane region" description="Helical" evidence="1">
    <location>
        <begin position="117"/>
        <end position="137"/>
    </location>
</feature>
<feature type="transmembrane region" description="Helical" evidence="1">
    <location>
        <begin position="150"/>
        <end position="170"/>
    </location>
</feature>
<feature type="transmembrane region" description="Helical" evidence="1">
    <location>
        <begin position="367"/>
        <end position="387"/>
    </location>
</feature>
<feature type="transmembrane region" description="Helical" evidence="1">
    <location>
        <begin position="404"/>
        <end position="424"/>
    </location>
</feature>
<feature type="transmembrane region" description="Helical" evidence="1">
    <location>
        <begin position="428"/>
        <end position="448"/>
    </location>
</feature>
<feature type="transmembrane region" description="Helical" evidence="1">
    <location>
        <begin position="454"/>
        <end position="474"/>
    </location>
</feature>
<feature type="transmembrane region" description="Helical" evidence="1">
    <location>
        <begin position="480"/>
        <end position="500"/>
    </location>
</feature>
<proteinExistence type="inferred from homology"/>
<dbReference type="EMBL" id="CP001654">
    <property type="protein sequence ID" value="ACS87424.1"/>
    <property type="molecule type" value="Genomic_DNA"/>
</dbReference>
<dbReference type="RefSeq" id="WP_015855321.1">
    <property type="nucleotide sequence ID" value="NC_012880.1"/>
</dbReference>
<dbReference type="SMR" id="C6C4L7"/>
<dbReference type="STRING" id="579405.Dd703_3667"/>
<dbReference type="KEGG" id="dda:Dd703_3667"/>
<dbReference type="eggNOG" id="COG1289">
    <property type="taxonomic scope" value="Bacteria"/>
</dbReference>
<dbReference type="HOGENOM" id="CLU_027647_0_0_6"/>
<dbReference type="Proteomes" id="UP000002734">
    <property type="component" value="Chromosome"/>
</dbReference>
<dbReference type="GO" id="GO:0005886">
    <property type="term" value="C:plasma membrane"/>
    <property type="evidence" value="ECO:0007669"/>
    <property type="project" value="UniProtKB-SubCell"/>
</dbReference>
<dbReference type="GO" id="GO:0022857">
    <property type="term" value="F:transmembrane transporter activity"/>
    <property type="evidence" value="ECO:0007669"/>
    <property type="project" value="UniProtKB-UniRule"/>
</dbReference>
<dbReference type="GO" id="GO:0046942">
    <property type="term" value="P:carboxylic acid transport"/>
    <property type="evidence" value="ECO:0007669"/>
    <property type="project" value="InterPro"/>
</dbReference>
<dbReference type="HAMAP" id="MF_01545">
    <property type="entry name" value="AaeB"/>
    <property type="match status" value="1"/>
</dbReference>
<dbReference type="InterPro" id="IPR006726">
    <property type="entry name" value="PHBA_efflux_AaeB/fusaric-R"/>
</dbReference>
<dbReference type="InterPro" id="IPR023706">
    <property type="entry name" value="PHBA_efflux_pump_AaeB"/>
</dbReference>
<dbReference type="NCBIfam" id="NF007916">
    <property type="entry name" value="PRK10631.1"/>
    <property type="match status" value="1"/>
</dbReference>
<dbReference type="PANTHER" id="PTHR30509:SF9">
    <property type="entry name" value="MULTIDRUG RESISTANCE PROTEIN MDTO"/>
    <property type="match status" value="1"/>
</dbReference>
<dbReference type="PANTHER" id="PTHR30509">
    <property type="entry name" value="P-HYDROXYBENZOIC ACID EFFLUX PUMP SUBUNIT-RELATED"/>
    <property type="match status" value="1"/>
</dbReference>
<dbReference type="Pfam" id="PF04632">
    <property type="entry name" value="FUSC"/>
    <property type="match status" value="1"/>
</dbReference>
<organism>
    <name type="scientific">Musicola paradisiaca (strain Ech703)</name>
    <name type="common">Dickeya paradisiaca</name>
    <name type="synonym">Dickeya dadantii</name>
    <dbReference type="NCBI Taxonomy" id="579405"/>
    <lineage>
        <taxon>Bacteria</taxon>
        <taxon>Pseudomonadati</taxon>
        <taxon>Pseudomonadota</taxon>
        <taxon>Gammaproteobacteria</taxon>
        <taxon>Enterobacterales</taxon>
        <taxon>Pectobacteriaceae</taxon>
        <taxon>Musicola</taxon>
    </lineage>
</organism>
<keyword id="KW-0997">Cell inner membrane</keyword>
<keyword id="KW-1003">Cell membrane</keyword>
<keyword id="KW-0472">Membrane</keyword>
<keyword id="KW-0812">Transmembrane</keyword>
<keyword id="KW-1133">Transmembrane helix</keyword>
<keyword id="KW-0813">Transport</keyword>
<protein>
    <recommendedName>
        <fullName evidence="1">p-hydroxybenzoic acid efflux pump subunit AaeB</fullName>
        <shortName evidence="1">pHBA efflux pump protein B</shortName>
    </recommendedName>
</protein>
<name>AAEB_MUSP7</name>
<sequence>MNSSVFPRLRFACKLSLAVVLSLVLGFWFEMETPRWAALTAAIVAAGPAFVAGGDPFSGAIRHRGLLRILGTFIGCFGALVIIMTTVRAPVVMLMLCCLWAGVCVWISSLVKTENSYVFALAGYTALIIIITSQSSPRAIPQFAIERCSEIILGIVCVILADLVFSPRSVKQDVDRAIDDLLLGQYQLLQRCVGRAATDDVDSCWHGLLRKTQAIGGMRNILLMESSHWQPAWRRMKTLLSQSWMMMTLAGEIGLMRRDGDCVVKGGLLMLLEQPVTTPGDLRRQLRQLRHLAASHSSRLPAPLVGWLAASSRYQLLAAGIRTNARISQRETEILEAETPVRASSAETHHALINGLRTGVATAVGCLFWLLTGWTSGSVCMVMLGVVTALVMRLPNPLMAAKDFLIGTLIALPLGAVMFMLVLPATQQSLLLLGLCIGVMTFVIGIEIQKRRLGSLGALASTINILVLDNPMTFNLSQFLDNAIGQIIGCVLALAVIMLIRDNSRARTGRTLLNRLVHGAIDGLSTRPARCRENHLPALYQHLFLLINLFPGDMAKYRLALSLIIVHQRLRQLDIPLSDTLAECHRQMRATAARVAGAAGDTQRSRYFSQLLTQMEEYRQHLGEHQVADDIVAAVARLTALLQRHQHALCD</sequence>
<accession>C6C4L7</accession>
<gene>
    <name evidence="1" type="primary">aaeB</name>
    <name type="ordered locus">Dd703_3667</name>
</gene>
<comment type="function">
    <text evidence="1">Forms an efflux pump with AaeA. Could function as a metabolic relief valve, allowing to eliminate certain compounds when they accumulate to high levels in the cell.</text>
</comment>
<comment type="subcellular location">
    <subcellularLocation>
        <location evidence="1">Cell inner membrane</location>
        <topology evidence="1">Multi-pass membrane protein</topology>
    </subcellularLocation>
</comment>
<comment type="similarity">
    <text evidence="1">Belongs to the aromatic acid exporter ArAE (TC 2.A.85) family.</text>
</comment>
<reference key="1">
    <citation type="submission" date="2009-06" db="EMBL/GenBank/DDBJ databases">
        <title>Complete sequence of Dickeya dadantii Ech703.</title>
        <authorList>
            <consortium name="US DOE Joint Genome Institute"/>
            <person name="Lucas S."/>
            <person name="Copeland A."/>
            <person name="Lapidus A."/>
            <person name="Glavina del Rio T."/>
            <person name="Dalin E."/>
            <person name="Tice H."/>
            <person name="Bruce D."/>
            <person name="Goodwin L."/>
            <person name="Pitluck S."/>
            <person name="Chertkov O."/>
            <person name="Brettin T."/>
            <person name="Detter J.C."/>
            <person name="Han C."/>
            <person name="Larimer F."/>
            <person name="Land M."/>
            <person name="Hauser L."/>
            <person name="Kyrpides N."/>
            <person name="Mikhailova N."/>
            <person name="Balakrishnan V."/>
            <person name="Glasner J."/>
            <person name="Perna N.T."/>
        </authorList>
    </citation>
    <scope>NUCLEOTIDE SEQUENCE [LARGE SCALE GENOMIC DNA]</scope>
    <source>
        <strain>Ech703</strain>
    </source>
</reference>